<accession>A4WE41</accession>
<reference key="1">
    <citation type="journal article" date="2010" name="PLoS Genet.">
        <title>Genome sequence of the plant growth promoting endophytic bacterium Enterobacter sp. 638.</title>
        <authorList>
            <person name="Taghavi S."/>
            <person name="van der Lelie D."/>
            <person name="Hoffman A."/>
            <person name="Zhang Y.B."/>
            <person name="Walla M.D."/>
            <person name="Vangronsveld J."/>
            <person name="Newman L."/>
            <person name="Monchy S."/>
        </authorList>
    </citation>
    <scope>NUCLEOTIDE SEQUENCE [LARGE SCALE GENOMIC DNA]</scope>
    <source>
        <strain>638</strain>
    </source>
</reference>
<name>IDI_ENT38</name>
<dbReference type="EC" id="5.3.3.2" evidence="1"/>
<dbReference type="EMBL" id="CP000653">
    <property type="protein sequence ID" value="ABP61971.1"/>
    <property type="molecule type" value="Genomic_DNA"/>
</dbReference>
<dbReference type="RefSeq" id="WP_015960299.1">
    <property type="nucleotide sequence ID" value="NC_009436.1"/>
</dbReference>
<dbReference type="SMR" id="A4WE41"/>
<dbReference type="STRING" id="399742.Ent638_3307"/>
<dbReference type="KEGG" id="ent:Ent638_3307"/>
<dbReference type="eggNOG" id="COG1443">
    <property type="taxonomic scope" value="Bacteria"/>
</dbReference>
<dbReference type="HOGENOM" id="CLU_060552_2_0_6"/>
<dbReference type="OrthoDB" id="9809458at2"/>
<dbReference type="UniPathway" id="UPA00059">
    <property type="reaction ID" value="UER00104"/>
</dbReference>
<dbReference type="Proteomes" id="UP000000230">
    <property type="component" value="Chromosome"/>
</dbReference>
<dbReference type="GO" id="GO:0005737">
    <property type="term" value="C:cytoplasm"/>
    <property type="evidence" value="ECO:0007669"/>
    <property type="project" value="UniProtKB-SubCell"/>
</dbReference>
<dbReference type="GO" id="GO:0004452">
    <property type="term" value="F:isopentenyl-diphosphate delta-isomerase activity"/>
    <property type="evidence" value="ECO:0007669"/>
    <property type="project" value="UniProtKB-UniRule"/>
</dbReference>
<dbReference type="GO" id="GO:0046872">
    <property type="term" value="F:metal ion binding"/>
    <property type="evidence" value="ECO:0007669"/>
    <property type="project" value="UniProtKB-KW"/>
</dbReference>
<dbReference type="GO" id="GO:0050992">
    <property type="term" value="P:dimethylallyl diphosphate biosynthetic process"/>
    <property type="evidence" value="ECO:0007669"/>
    <property type="project" value="UniProtKB-UniRule"/>
</dbReference>
<dbReference type="GO" id="GO:0008299">
    <property type="term" value="P:isoprenoid biosynthetic process"/>
    <property type="evidence" value="ECO:0007669"/>
    <property type="project" value="UniProtKB-KW"/>
</dbReference>
<dbReference type="CDD" id="cd02885">
    <property type="entry name" value="NUDIX_IPP_Isomerase"/>
    <property type="match status" value="1"/>
</dbReference>
<dbReference type="FunFam" id="3.90.79.10:FF:000009">
    <property type="entry name" value="Isopentenyl-diphosphate Delta-isomerase"/>
    <property type="match status" value="1"/>
</dbReference>
<dbReference type="Gene3D" id="3.90.79.10">
    <property type="entry name" value="Nucleoside Triphosphate Pyrophosphohydrolase"/>
    <property type="match status" value="1"/>
</dbReference>
<dbReference type="HAMAP" id="MF_00202">
    <property type="entry name" value="Idi"/>
    <property type="match status" value="1"/>
</dbReference>
<dbReference type="InterPro" id="IPR056375">
    <property type="entry name" value="Idi_bact"/>
</dbReference>
<dbReference type="InterPro" id="IPR011876">
    <property type="entry name" value="IsopentenylPP_isomerase_typ1"/>
</dbReference>
<dbReference type="InterPro" id="IPR015797">
    <property type="entry name" value="NUDIX_hydrolase-like_dom_sf"/>
</dbReference>
<dbReference type="InterPro" id="IPR000086">
    <property type="entry name" value="NUDIX_hydrolase_dom"/>
</dbReference>
<dbReference type="NCBIfam" id="TIGR02150">
    <property type="entry name" value="IPP_isom_1"/>
    <property type="match status" value="1"/>
</dbReference>
<dbReference type="NCBIfam" id="NF002995">
    <property type="entry name" value="PRK03759.1"/>
    <property type="match status" value="1"/>
</dbReference>
<dbReference type="PANTHER" id="PTHR10885">
    <property type="entry name" value="ISOPENTENYL-DIPHOSPHATE DELTA-ISOMERASE"/>
    <property type="match status" value="1"/>
</dbReference>
<dbReference type="PANTHER" id="PTHR10885:SF0">
    <property type="entry name" value="ISOPENTENYL-DIPHOSPHATE DELTA-ISOMERASE"/>
    <property type="match status" value="1"/>
</dbReference>
<dbReference type="Pfam" id="PF00293">
    <property type="entry name" value="NUDIX"/>
    <property type="match status" value="1"/>
</dbReference>
<dbReference type="PIRSF" id="PIRSF018427">
    <property type="entry name" value="Isopntndiph_ism"/>
    <property type="match status" value="1"/>
</dbReference>
<dbReference type="SUPFAM" id="SSF55811">
    <property type="entry name" value="Nudix"/>
    <property type="match status" value="1"/>
</dbReference>
<dbReference type="PROSITE" id="PS51462">
    <property type="entry name" value="NUDIX"/>
    <property type="match status" value="1"/>
</dbReference>
<protein>
    <recommendedName>
        <fullName evidence="1">Isopentenyl-diphosphate Delta-isomerase</fullName>
        <shortName evidence="1">IPP isomerase</shortName>
        <ecNumber evidence="1">5.3.3.2</ecNumber>
    </recommendedName>
    <alternativeName>
        <fullName evidence="1">IPP:DMAPP isomerase</fullName>
    </alternativeName>
    <alternativeName>
        <fullName evidence="1">Isopentenyl pyrophosphate isomerase</fullName>
    </alternativeName>
</protein>
<comment type="function">
    <text evidence="1">Catalyzes the 1,3-allylic rearrangement of the homoallylic substrate isopentenyl (IPP) to its highly electrophilic allylic isomer, dimethylallyl diphosphate (DMAPP).</text>
</comment>
<comment type="catalytic activity">
    <reaction evidence="1">
        <text>isopentenyl diphosphate = dimethylallyl diphosphate</text>
        <dbReference type="Rhea" id="RHEA:23284"/>
        <dbReference type="ChEBI" id="CHEBI:57623"/>
        <dbReference type="ChEBI" id="CHEBI:128769"/>
        <dbReference type="EC" id="5.3.3.2"/>
    </reaction>
</comment>
<comment type="cofactor">
    <cofactor evidence="1">
        <name>Mg(2+)</name>
        <dbReference type="ChEBI" id="CHEBI:18420"/>
    </cofactor>
    <text evidence="1">Binds 1 Mg(2+) ion per subunit. The magnesium ion binds only when substrate is bound.</text>
</comment>
<comment type="cofactor">
    <cofactor evidence="1">
        <name>Mn(2+)</name>
        <dbReference type="ChEBI" id="CHEBI:29035"/>
    </cofactor>
    <text evidence="1">Binds 1 Mn(2+) ion per subunit.</text>
</comment>
<comment type="pathway">
    <text evidence="1">Isoprenoid biosynthesis; dimethylallyl diphosphate biosynthesis; dimethylallyl diphosphate from isopentenyl diphosphate: step 1/1.</text>
</comment>
<comment type="subunit">
    <text evidence="1">Homodimer.</text>
</comment>
<comment type="subcellular location">
    <subcellularLocation>
        <location evidence="1">Cytoplasm</location>
    </subcellularLocation>
</comment>
<comment type="similarity">
    <text evidence="1">Belongs to the IPP isomerase type 1 family.</text>
</comment>
<proteinExistence type="inferred from homology"/>
<keyword id="KW-0963">Cytoplasm</keyword>
<keyword id="KW-0413">Isomerase</keyword>
<keyword id="KW-0414">Isoprene biosynthesis</keyword>
<keyword id="KW-0460">Magnesium</keyword>
<keyword id="KW-0464">Manganese</keyword>
<keyword id="KW-0479">Metal-binding</keyword>
<evidence type="ECO:0000255" key="1">
    <source>
        <dbReference type="HAMAP-Rule" id="MF_00202"/>
    </source>
</evidence>
<organism>
    <name type="scientific">Enterobacter sp. (strain 638)</name>
    <dbReference type="NCBI Taxonomy" id="399742"/>
    <lineage>
        <taxon>Bacteria</taxon>
        <taxon>Pseudomonadati</taxon>
        <taxon>Pseudomonadota</taxon>
        <taxon>Gammaproteobacteria</taxon>
        <taxon>Enterobacterales</taxon>
        <taxon>Enterobacteriaceae</taxon>
        <taxon>Enterobacter</taxon>
    </lineage>
</organism>
<feature type="chain" id="PRO_0000325214" description="Isopentenyl-diphosphate Delta-isomerase">
    <location>
        <begin position="1"/>
        <end position="183"/>
    </location>
</feature>
<feature type="domain" description="Nudix hydrolase">
    <location>
        <begin position="31"/>
        <end position="165"/>
    </location>
</feature>
<feature type="active site" evidence="1">
    <location>
        <position position="68"/>
    </location>
</feature>
<feature type="active site" evidence="1">
    <location>
        <position position="117"/>
    </location>
</feature>
<feature type="binding site" evidence="1">
    <location>
        <position position="26"/>
    </location>
    <ligand>
        <name>Mn(2+)</name>
        <dbReference type="ChEBI" id="CHEBI:29035"/>
    </ligand>
</feature>
<feature type="binding site" evidence="1">
    <location>
        <position position="33"/>
    </location>
    <ligand>
        <name>Mn(2+)</name>
        <dbReference type="ChEBI" id="CHEBI:29035"/>
    </ligand>
</feature>
<feature type="binding site" evidence="1">
    <location>
        <position position="70"/>
    </location>
    <ligand>
        <name>Mn(2+)</name>
        <dbReference type="ChEBI" id="CHEBI:29035"/>
    </ligand>
</feature>
<feature type="binding site" evidence="1">
    <location>
        <position position="88"/>
    </location>
    <ligand>
        <name>Mg(2+)</name>
        <dbReference type="ChEBI" id="CHEBI:18420"/>
    </ligand>
</feature>
<feature type="binding site" evidence="1">
    <location>
        <position position="115"/>
    </location>
    <ligand>
        <name>Mn(2+)</name>
        <dbReference type="ChEBI" id="CHEBI:29035"/>
    </ligand>
</feature>
<feature type="binding site" evidence="1">
    <location>
        <position position="117"/>
    </location>
    <ligand>
        <name>Mn(2+)</name>
        <dbReference type="ChEBI" id="CHEBI:29035"/>
    </ligand>
</feature>
<gene>
    <name evidence="1" type="primary">idi</name>
    <name type="ordered locus">Ent638_3307</name>
</gene>
<sequence>MSIQEHVILVNDQGEVVGTQEKYAAHTSHTSLHLAFSSWLFNDRGQCLVTRRALSKIAWPGVWTNSVCGHPQIGETTEQAIARRCRFEVGVEIAQLTPIAADFRYCEIDPSGIVENEICPVFAAQIVSPLKVNPDEVMDYQWVELTSLLRALEATPWAFSPWMVSEAANASEKLKHFADNVKA</sequence>